<accession>P12701</accession>
<feature type="chain" id="PRO_0000183651" description="Cytochrome c oxidase subunit 2">
    <location>
        <begin position="1"/>
        <end position="229"/>
    </location>
</feature>
<feature type="topological domain" description="Mitochondrial intermembrane" evidence="2">
    <location>
        <begin position="1"/>
        <end position="26"/>
    </location>
</feature>
<feature type="transmembrane region" description="Helical" evidence="2">
    <location>
        <begin position="27"/>
        <end position="48"/>
    </location>
</feature>
<feature type="topological domain" description="Mitochondrial matrix" evidence="2">
    <location>
        <begin position="49"/>
        <end position="62"/>
    </location>
</feature>
<feature type="transmembrane region" description="Helical" evidence="2">
    <location>
        <begin position="63"/>
        <end position="82"/>
    </location>
</feature>
<feature type="topological domain" description="Mitochondrial intermembrane" evidence="2">
    <location>
        <begin position="83"/>
        <end position="229"/>
    </location>
</feature>
<feature type="binding site" evidence="1">
    <location>
        <position position="161"/>
    </location>
    <ligand>
        <name>Cu cation</name>
        <dbReference type="ChEBI" id="CHEBI:23378"/>
        <label>A1</label>
    </ligand>
</feature>
<feature type="binding site" evidence="1">
    <location>
        <position position="196"/>
    </location>
    <ligand>
        <name>Cu cation</name>
        <dbReference type="ChEBI" id="CHEBI:23378"/>
        <label>A1</label>
    </ligand>
</feature>
<feature type="binding site" evidence="1">
    <location>
        <position position="196"/>
    </location>
    <ligand>
        <name>Cu cation</name>
        <dbReference type="ChEBI" id="CHEBI:23378"/>
        <label>A2</label>
    </ligand>
</feature>
<feature type="binding site" evidence="1">
    <location>
        <position position="198"/>
    </location>
    <ligand>
        <name>Cu cation</name>
        <dbReference type="ChEBI" id="CHEBI:23378"/>
        <label>A2</label>
    </ligand>
</feature>
<feature type="binding site" evidence="1">
    <location>
        <position position="198"/>
    </location>
    <ligand>
        <name>Mg(2+)</name>
        <dbReference type="ChEBI" id="CHEBI:18420"/>
        <note>ligand shared with subunit 1</note>
    </ligand>
</feature>
<feature type="binding site" evidence="1">
    <location>
        <position position="200"/>
    </location>
    <ligand>
        <name>Cu cation</name>
        <dbReference type="ChEBI" id="CHEBI:23378"/>
        <label>A1</label>
    </ligand>
</feature>
<feature type="binding site" evidence="1">
    <location>
        <position position="200"/>
    </location>
    <ligand>
        <name>Cu cation</name>
        <dbReference type="ChEBI" id="CHEBI:23378"/>
        <label>A2</label>
    </ligand>
</feature>
<feature type="binding site" evidence="1">
    <location>
        <position position="204"/>
    </location>
    <ligand>
        <name>Cu cation</name>
        <dbReference type="ChEBI" id="CHEBI:23378"/>
        <label>A2</label>
    </ligand>
</feature>
<feature type="binding site" evidence="1">
    <location>
        <position position="207"/>
    </location>
    <ligand>
        <name>Cu cation</name>
        <dbReference type="ChEBI" id="CHEBI:23378"/>
        <label>A1</label>
    </ligand>
</feature>
<feature type="sequence conflict" description="In Ref. 2." evidence="3" ref="2">
    <original>L</original>
    <variation>P</variation>
    <location>
        <position position="9"/>
    </location>
</feature>
<feature type="sequence conflict" description="In Ref. 2." evidence="3" ref="2">
    <original>D</original>
    <variation>H</variation>
    <location>
        <position position="11"/>
    </location>
</feature>
<evidence type="ECO:0000250" key="1">
    <source>
        <dbReference type="UniProtKB" id="P00410"/>
    </source>
</evidence>
<evidence type="ECO:0000255" key="2"/>
<evidence type="ECO:0000305" key="3"/>
<reference key="1">
    <citation type="journal article" date="1989" name="J. Biol. Chem.">
        <title>The complete nucleotide sequence, gene organization, and genetic code of the mitochondrial genome of Paracentrotus lividus.</title>
        <authorList>
            <person name="Cantatore P."/>
            <person name="Roberti M."/>
            <person name="Rainaldi G."/>
            <person name="Gadaleta M.N."/>
            <person name="Saccone C."/>
        </authorList>
    </citation>
    <scope>NUCLEOTIDE SEQUENCE [GENOMIC DNA]</scope>
    <source>
        <tissue>Egg</tissue>
    </source>
</reference>
<reference key="2">
    <citation type="journal article" date="1987" name="Gene">
        <title>A novel gene order in the Paracentrotus lividus mitochondrial genome.</title>
        <authorList>
            <person name="Cantatore P."/>
            <person name="Roberti M."/>
            <person name="Morisco P."/>
            <person name="Rainaldi G."/>
            <person name="Gadaleta M.N."/>
            <person name="Saccone C."/>
        </authorList>
    </citation>
    <scope>NUCLEOTIDE SEQUENCE [GENOMIC DNA] OF 1-11</scope>
    <source>
        <tissue>Egg</tissue>
    </source>
</reference>
<proteinExistence type="inferred from homology"/>
<comment type="function">
    <text evidence="1">Component of the cytochrome c oxidase, the last enzyme in the mitochondrial electron transport chain which drives oxidative phosphorylation. The respiratory chain contains 3 multisubunit complexes succinate dehydrogenase (complex II, CII), ubiquinol-cytochrome c oxidoreductase (cytochrome b-c1 complex, complex III, CIII) and cytochrome c oxidase (complex IV, CIV), that cooperate to transfer electrons derived from NADH and succinate to molecular oxygen, creating an electrochemical gradient over the inner membrane that drives transmembrane transport and the ATP synthase. Cytochrome c oxidase is the component of the respiratory chain that catalyzes the reduction of oxygen to water. Electrons originating from reduced cytochrome c in the intermembrane space (IMS) are transferred via the dinuclear copper A center (CU(A)) of subunit 2 and heme A of subunit 1 to the active site in subunit 1, a binuclear center (BNC) formed by heme A3 and copper B (CU(B)). The BNC reduces molecular oxygen to 2 water molecules using 4 electrons from cytochrome c in the IMS and 4 protons from the mitochondrial matrix.</text>
</comment>
<comment type="catalytic activity">
    <reaction evidence="1">
        <text>4 Fe(II)-[cytochrome c] + O2 + 8 H(+)(in) = 4 Fe(III)-[cytochrome c] + 2 H2O + 4 H(+)(out)</text>
        <dbReference type="Rhea" id="RHEA:11436"/>
        <dbReference type="Rhea" id="RHEA-COMP:10350"/>
        <dbReference type="Rhea" id="RHEA-COMP:14399"/>
        <dbReference type="ChEBI" id="CHEBI:15377"/>
        <dbReference type="ChEBI" id="CHEBI:15378"/>
        <dbReference type="ChEBI" id="CHEBI:15379"/>
        <dbReference type="ChEBI" id="CHEBI:29033"/>
        <dbReference type="ChEBI" id="CHEBI:29034"/>
        <dbReference type="EC" id="7.1.1.9"/>
    </reaction>
    <physiologicalReaction direction="left-to-right" evidence="1">
        <dbReference type="Rhea" id="RHEA:11437"/>
    </physiologicalReaction>
</comment>
<comment type="cofactor">
    <cofactor evidence="1">
        <name>Cu cation</name>
        <dbReference type="ChEBI" id="CHEBI:23378"/>
    </cofactor>
    <text evidence="1">Binds a dinuclear copper A center per subunit.</text>
</comment>
<comment type="subunit">
    <text evidence="1">Component of the cytochrome c oxidase (complex IV, CIV), a multisubunit enzyme composed of a catalytic core of 3 subunits and several supernumerary subunits. The complex exists as a monomer or a dimer and forms supercomplexes (SCs) in the inner mitochondrial membrane with ubiquinol-cytochrome c oxidoreductase (cytochrome b-c1 complex, complex III, CIII).</text>
</comment>
<comment type="subcellular location">
    <subcellularLocation>
        <location evidence="1">Mitochondrion inner membrane</location>
        <topology evidence="1">Multi-pass membrane protein</topology>
    </subcellularLocation>
</comment>
<comment type="similarity">
    <text evidence="3">Belongs to the cytochrome c oxidase subunit 2 family.</text>
</comment>
<gene>
    <name type="primary">COII</name>
</gene>
<name>COX2_PARLI</name>
<dbReference type="EC" id="7.1.1.9"/>
<dbReference type="EMBL" id="J04815">
    <property type="protein sequence ID" value="AAA68137.1"/>
    <property type="molecule type" value="Genomic_DNA"/>
</dbReference>
<dbReference type="EMBL" id="M16520">
    <property type="protein sequence ID" value="AAA31991.1"/>
    <property type="molecule type" value="Genomic_DNA"/>
</dbReference>
<dbReference type="PIR" id="E34284">
    <property type="entry name" value="E34284"/>
</dbReference>
<dbReference type="SMR" id="P12701"/>
<dbReference type="CTD" id="4513"/>
<dbReference type="GO" id="GO:0005743">
    <property type="term" value="C:mitochondrial inner membrane"/>
    <property type="evidence" value="ECO:0007669"/>
    <property type="project" value="UniProtKB-SubCell"/>
</dbReference>
<dbReference type="GO" id="GO:0005507">
    <property type="term" value="F:copper ion binding"/>
    <property type="evidence" value="ECO:0007669"/>
    <property type="project" value="InterPro"/>
</dbReference>
<dbReference type="GO" id="GO:0004129">
    <property type="term" value="F:cytochrome-c oxidase activity"/>
    <property type="evidence" value="ECO:0007669"/>
    <property type="project" value="UniProtKB-EC"/>
</dbReference>
<dbReference type="GO" id="GO:0042773">
    <property type="term" value="P:ATP synthesis coupled electron transport"/>
    <property type="evidence" value="ECO:0007669"/>
    <property type="project" value="TreeGrafter"/>
</dbReference>
<dbReference type="CDD" id="cd13912">
    <property type="entry name" value="CcO_II_C"/>
    <property type="match status" value="1"/>
</dbReference>
<dbReference type="FunFam" id="1.10.287.90:FF:000001">
    <property type="entry name" value="Cytochrome c oxidase subunit 2"/>
    <property type="match status" value="1"/>
</dbReference>
<dbReference type="FunFam" id="2.60.40.420:FF:000001">
    <property type="entry name" value="Cytochrome c oxidase subunit 2"/>
    <property type="match status" value="1"/>
</dbReference>
<dbReference type="Gene3D" id="1.10.287.90">
    <property type="match status" value="1"/>
</dbReference>
<dbReference type="Gene3D" id="2.60.40.420">
    <property type="entry name" value="Cupredoxins - blue copper proteins"/>
    <property type="match status" value="1"/>
</dbReference>
<dbReference type="InterPro" id="IPR045187">
    <property type="entry name" value="CcO_II"/>
</dbReference>
<dbReference type="InterPro" id="IPR002429">
    <property type="entry name" value="CcO_II-like_C"/>
</dbReference>
<dbReference type="InterPro" id="IPR034210">
    <property type="entry name" value="CcO_II_C"/>
</dbReference>
<dbReference type="InterPro" id="IPR001505">
    <property type="entry name" value="Copper_CuA"/>
</dbReference>
<dbReference type="InterPro" id="IPR008972">
    <property type="entry name" value="Cupredoxin"/>
</dbReference>
<dbReference type="InterPro" id="IPR014222">
    <property type="entry name" value="Cyt_c_oxidase_su2"/>
</dbReference>
<dbReference type="InterPro" id="IPR011759">
    <property type="entry name" value="Cyt_c_oxidase_su2_TM_dom"/>
</dbReference>
<dbReference type="InterPro" id="IPR036257">
    <property type="entry name" value="Cyt_c_oxidase_su2_TM_sf"/>
</dbReference>
<dbReference type="NCBIfam" id="TIGR02866">
    <property type="entry name" value="CoxB"/>
    <property type="match status" value="1"/>
</dbReference>
<dbReference type="PANTHER" id="PTHR22888:SF9">
    <property type="entry name" value="CYTOCHROME C OXIDASE SUBUNIT 2"/>
    <property type="match status" value="1"/>
</dbReference>
<dbReference type="PANTHER" id="PTHR22888">
    <property type="entry name" value="CYTOCHROME C OXIDASE, SUBUNIT II"/>
    <property type="match status" value="1"/>
</dbReference>
<dbReference type="Pfam" id="PF00116">
    <property type="entry name" value="COX2"/>
    <property type="match status" value="1"/>
</dbReference>
<dbReference type="Pfam" id="PF02790">
    <property type="entry name" value="COX2_TM"/>
    <property type="match status" value="1"/>
</dbReference>
<dbReference type="PRINTS" id="PR01166">
    <property type="entry name" value="CYCOXIDASEII"/>
</dbReference>
<dbReference type="SUPFAM" id="SSF49503">
    <property type="entry name" value="Cupredoxins"/>
    <property type="match status" value="1"/>
</dbReference>
<dbReference type="SUPFAM" id="SSF81464">
    <property type="entry name" value="Cytochrome c oxidase subunit II-like, transmembrane region"/>
    <property type="match status" value="1"/>
</dbReference>
<dbReference type="PROSITE" id="PS00078">
    <property type="entry name" value="COX2"/>
    <property type="match status" value="1"/>
</dbReference>
<dbReference type="PROSITE" id="PS50857">
    <property type="entry name" value="COX2_CUA"/>
    <property type="match status" value="1"/>
</dbReference>
<dbReference type="PROSITE" id="PS50999">
    <property type="entry name" value="COX2_TM"/>
    <property type="match status" value="1"/>
</dbReference>
<keyword id="KW-0186">Copper</keyword>
<keyword id="KW-0249">Electron transport</keyword>
<keyword id="KW-0460">Magnesium</keyword>
<keyword id="KW-0472">Membrane</keyword>
<keyword id="KW-0479">Metal-binding</keyword>
<keyword id="KW-0496">Mitochondrion</keyword>
<keyword id="KW-0999">Mitochondrion inner membrane</keyword>
<keyword id="KW-0679">Respiratory chain</keyword>
<keyword id="KW-1278">Translocase</keyword>
<keyword id="KW-0812">Transmembrane</keyword>
<keyword id="KW-1133">Transmembrane helix</keyword>
<keyword id="KW-0813">Transport</keyword>
<geneLocation type="mitochondrion"/>
<protein>
    <recommendedName>
        <fullName>Cytochrome c oxidase subunit 2</fullName>
        <ecNumber>7.1.1.9</ecNumber>
    </recommendedName>
    <alternativeName>
        <fullName>Cytochrome c oxidase polypeptide II</fullName>
    </alternativeName>
</protein>
<sequence>MATWAQFGLQDASSPLMEELTYFHDYALIVLTLITILVFYGLVSLLLSSSTNRFFLEGQELETIWTVVPAFILIFIALPSLQLLYLMDEVNNPFLTIKAIGHQWYWSYEYTDYNDLEFDSYMVPTSDVSLGNPRLLEVDNRLILPMQNPIRVLVSSADVLHSWAVPSLGVKMDAVPGRLNQTTFFAARAGLFYGQCSEICGANHSFMPILIESVPFSNFENWVAQYIEE</sequence>
<organism>
    <name type="scientific">Paracentrotus lividus</name>
    <name type="common">Common sea urchin</name>
    <dbReference type="NCBI Taxonomy" id="7656"/>
    <lineage>
        <taxon>Eukaryota</taxon>
        <taxon>Metazoa</taxon>
        <taxon>Echinodermata</taxon>
        <taxon>Eleutherozoa</taxon>
        <taxon>Echinozoa</taxon>
        <taxon>Echinoidea</taxon>
        <taxon>Euechinoidea</taxon>
        <taxon>Echinacea</taxon>
        <taxon>Camarodonta</taxon>
        <taxon>Echinidea</taxon>
        <taxon>Echinidae</taxon>
        <taxon>Paracentrotus</taxon>
    </lineage>
</organism>